<keyword id="KW-0067">ATP-binding</keyword>
<keyword id="KW-0227">DNA damage</keyword>
<keyword id="KW-0234">DNA repair</keyword>
<keyword id="KW-0238">DNA-binding</keyword>
<keyword id="KW-0547">Nucleotide-binding</keyword>
<name>MUTS_FRATW</name>
<dbReference type="EMBL" id="CP000608">
    <property type="protein sequence ID" value="ABO46664.1"/>
    <property type="molecule type" value="Genomic_DNA"/>
</dbReference>
<dbReference type="RefSeq" id="WP_003025944.1">
    <property type="nucleotide sequence ID" value="NC_009257.1"/>
</dbReference>
<dbReference type="SMR" id="A4IXL2"/>
<dbReference type="KEGG" id="ftw:FTW_0792"/>
<dbReference type="HOGENOM" id="CLU_002472_4_0_6"/>
<dbReference type="GO" id="GO:0005829">
    <property type="term" value="C:cytosol"/>
    <property type="evidence" value="ECO:0007669"/>
    <property type="project" value="TreeGrafter"/>
</dbReference>
<dbReference type="GO" id="GO:0005524">
    <property type="term" value="F:ATP binding"/>
    <property type="evidence" value="ECO:0007669"/>
    <property type="project" value="UniProtKB-UniRule"/>
</dbReference>
<dbReference type="GO" id="GO:0140664">
    <property type="term" value="F:ATP-dependent DNA damage sensor activity"/>
    <property type="evidence" value="ECO:0007669"/>
    <property type="project" value="InterPro"/>
</dbReference>
<dbReference type="GO" id="GO:0003684">
    <property type="term" value="F:damaged DNA binding"/>
    <property type="evidence" value="ECO:0007669"/>
    <property type="project" value="UniProtKB-UniRule"/>
</dbReference>
<dbReference type="GO" id="GO:0030983">
    <property type="term" value="F:mismatched DNA binding"/>
    <property type="evidence" value="ECO:0007669"/>
    <property type="project" value="InterPro"/>
</dbReference>
<dbReference type="GO" id="GO:0006298">
    <property type="term" value="P:mismatch repair"/>
    <property type="evidence" value="ECO:0007669"/>
    <property type="project" value="UniProtKB-UniRule"/>
</dbReference>
<dbReference type="FunFam" id="1.10.1420.10:FF:000002">
    <property type="entry name" value="DNA mismatch repair protein MutS"/>
    <property type="match status" value="1"/>
</dbReference>
<dbReference type="FunFam" id="3.40.1170.10:FF:000001">
    <property type="entry name" value="DNA mismatch repair protein MutS"/>
    <property type="match status" value="1"/>
</dbReference>
<dbReference type="FunFam" id="3.40.50.300:FF:000870">
    <property type="entry name" value="MutS protein homolog 4"/>
    <property type="match status" value="1"/>
</dbReference>
<dbReference type="Gene3D" id="1.10.1420.10">
    <property type="match status" value="2"/>
</dbReference>
<dbReference type="Gene3D" id="3.40.1170.10">
    <property type="entry name" value="DNA repair protein MutS, domain I"/>
    <property type="match status" value="1"/>
</dbReference>
<dbReference type="Gene3D" id="3.30.420.110">
    <property type="entry name" value="MutS, connector domain"/>
    <property type="match status" value="1"/>
</dbReference>
<dbReference type="Gene3D" id="3.40.50.300">
    <property type="entry name" value="P-loop containing nucleotide triphosphate hydrolases"/>
    <property type="match status" value="1"/>
</dbReference>
<dbReference type="HAMAP" id="MF_00096">
    <property type="entry name" value="MutS"/>
    <property type="match status" value="1"/>
</dbReference>
<dbReference type="InterPro" id="IPR005748">
    <property type="entry name" value="DNA_mismatch_repair_MutS"/>
</dbReference>
<dbReference type="InterPro" id="IPR007695">
    <property type="entry name" value="DNA_mismatch_repair_MutS-lik_N"/>
</dbReference>
<dbReference type="InterPro" id="IPR017261">
    <property type="entry name" value="DNA_mismatch_repair_MutS/MSH"/>
</dbReference>
<dbReference type="InterPro" id="IPR000432">
    <property type="entry name" value="DNA_mismatch_repair_MutS_C"/>
</dbReference>
<dbReference type="InterPro" id="IPR007861">
    <property type="entry name" value="DNA_mismatch_repair_MutS_clamp"/>
</dbReference>
<dbReference type="InterPro" id="IPR007696">
    <property type="entry name" value="DNA_mismatch_repair_MutS_core"/>
</dbReference>
<dbReference type="InterPro" id="IPR016151">
    <property type="entry name" value="DNA_mismatch_repair_MutS_N"/>
</dbReference>
<dbReference type="InterPro" id="IPR036187">
    <property type="entry name" value="DNA_mismatch_repair_MutS_sf"/>
</dbReference>
<dbReference type="InterPro" id="IPR007860">
    <property type="entry name" value="DNA_mmatch_repair_MutS_con_dom"/>
</dbReference>
<dbReference type="InterPro" id="IPR045076">
    <property type="entry name" value="MutS"/>
</dbReference>
<dbReference type="InterPro" id="IPR036678">
    <property type="entry name" value="MutS_con_dom_sf"/>
</dbReference>
<dbReference type="InterPro" id="IPR027417">
    <property type="entry name" value="P-loop_NTPase"/>
</dbReference>
<dbReference type="NCBIfam" id="TIGR01070">
    <property type="entry name" value="mutS1"/>
    <property type="match status" value="1"/>
</dbReference>
<dbReference type="NCBIfam" id="NF003810">
    <property type="entry name" value="PRK05399.1"/>
    <property type="match status" value="1"/>
</dbReference>
<dbReference type="PANTHER" id="PTHR11361:SF34">
    <property type="entry name" value="DNA MISMATCH REPAIR PROTEIN MSH1, MITOCHONDRIAL"/>
    <property type="match status" value="1"/>
</dbReference>
<dbReference type="PANTHER" id="PTHR11361">
    <property type="entry name" value="DNA MISMATCH REPAIR PROTEIN MUTS FAMILY MEMBER"/>
    <property type="match status" value="1"/>
</dbReference>
<dbReference type="Pfam" id="PF01624">
    <property type="entry name" value="MutS_I"/>
    <property type="match status" value="1"/>
</dbReference>
<dbReference type="Pfam" id="PF05188">
    <property type="entry name" value="MutS_II"/>
    <property type="match status" value="1"/>
</dbReference>
<dbReference type="Pfam" id="PF05192">
    <property type="entry name" value="MutS_III"/>
    <property type="match status" value="1"/>
</dbReference>
<dbReference type="Pfam" id="PF05190">
    <property type="entry name" value="MutS_IV"/>
    <property type="match status" value="1"/>
</dbReference>
<dbReference type="Pfam" id="PF00488">
    <property type="entry name" value="MutS_V"/>
    <property type="match status" value="1"/>
</dbReference>
<dbReference type="PIRSF" id="PIRSF037677">
    <property type="entry name" value="DNA_mis_repair_Msh6"/>
    <property type="match status" value="1"/>
</dbReference>
<dbReference type="SMART" id="SM00534">
    <property type="entry name" value="MUTSac"/>
    <property type="match status" value="1"/>
</dbReference>
<dbReference type="SMART" id="SM00533">
    <property type="entry name" value="MUTSd"/>
    <property type="match status" value="1"/>
</dbReference>
<dbReference type="SUPFAM" id="SSF55271">
    <property type="entry name" value="DNA repair protein MutS, domain I"/>
    <property type="match status" value="1"/>
</dbReference>
<dbReference type="SUPFAM" id="SSF53150">
    <property type="entry name" value="DNA repair protein MutS, domain II"/>
    <property type="match status" value="1"/>
</dbReference>
<dbReference type="SUPFAM" id="SSF48334">
    <property type="entry name" value="DNA repair protein MutS, domain III"/>
    <property type="match status" value="1"/>
</dbReference>
<dbReference type="SUPFAM" id="SSF52540">
    <property type="entry name" value="P-loop containing nucleoside triphosphate hydrolases"/>
    <property type="match status" value="1"/>
</dbReference>
<dbReference type="PROSITE" id="PS00486">
    <property type="entry name" value="DNA_MISMATCH_REPAIR_2"/>
    <property type="match status" value="1"/>
</dbReference>
<proteinExistence type="inferred from homology"/>
<protein>
    <recommendedName>
        <fullName evidence="1">DNA mismatch repair protein MutS</fullName>
    </recommendedName>
</protein>
<sequence length="844" mass="95716">MQDISNHTPMIQQYLKIKSQYQDILLFYRMGDFYELFFDDAKKAAELLDITLTARGKSNGESIPMAGVPYHAAEAYIAKIVKKGLSIAICEQTGDPNTSKGPVERQVTRIITPATVSEEAFLDNNQDSILVSIFEKNNKYYLAYTSYTQGKIYLVKTLTSLNELKNTVLKLSPQEIITNSHELAQQNPFKKPIKALEEWYYSNFEAKKYINDSLDTNIANNILNLYKNDQLTTIGSILSYLTNILKDTPRHITDISYEQEQDTLNIDINSRINLELDNNSKSSLLSIIGKCKTSLGSRLLKRYFSNPTRNLNILATRHSIINSLGENQHFLKIQDVLSYISDIERIISRVALGTVKPKDLVALRDSLEQLPILKKLLSEKNTPEITNINNRIHQLDELVTLLDKAIIENPPTTIRDGGVIKEGFDKELDELKSIKDNSYDFLIKFEELQKQKTGISTLKVGYNRVHGYYIELSKQHADKIPTEYVRRQTLKASERYITEELKNFEDKVLSSKEKALAREKLIYDTLLKKVIEYYKQIQETAASIAEIDVLANFAERAIKLKLSQPKFNNLAKLELKEVRHLAIEHNIDEPFIPNDTLLSKDTNTLQIITGPNMGGKSTYMRQVAQLIFLAYIGSFVPASYADICDIDTIYTRIGASDDISSGRSTFMVEMTETAYILNNASAKSLVIMDEIGRGTSTFDGLALAKACAEKFAQIGAFTLFATHYFELTELAKQYPNVCNIHFEAKEYKDNIYFMHKAVTGAAKKSYGIQVAKLAGISQDVLESAKQNLYNLEKKQQLTESTQVQAQFQLEPTTQNPLQQKLDAIDINTITPLEALNILFELKKR</sequence>
<feature type="chain" id="PRO_0000335159" description="DNA mismatch repair protein MutS">
    <location>
        <begin position="1"/>
        <end position="844"/>
    </location>
</feature>
<feature type="binding site" evidence="1">
    <location>
        <begin position="610"/>
        <end position="617"/>
    </location>
    <ligand>
        <name>ATP</name>
        <dbReference type="ChEBI" id="CHEBI:30616"/>
    </ligand>
</feature>
<reference key="1">
    <citation type="journal article" date="2007" name="PLoS ONE">
        <title>Complete genomic characterization of a pathogenic A.II strain of Francisella tularensis subspecies tularensis.</title>
        <authorList>
            <person name="Beckstrom-Sternberg S.M."/>
            <person name="Auerbach R.K."/>
            <person name="Godbole S."/>
            <person name="Pearson J.V."/>
            <person name="Beckstrom-Sternberg J.S."/>
            <person name="Deng Z."/>
            <person name="Munk C."/>
            <person name="Kubota K."/>
            <person name="Zhou Y."/>
            <person name="Bruce D."/>
            <person name="Noronha J."/>
            <person name="Scheuermann R.H."/>
            <person name="Wang A."/>
            <person name="Wei X."/>
            <person name="Wang J."/>
            <person name="Hao J."/>
            <person name="Wagner D.M."/>
            <person name="Brettin T.S."/>
            <person name="Brown N."/>
            <person name="Gilna P."/>
            <person name="Keim P.S."/>
        </authorList>
    </citation>
    <scope>NUCLEOTIDE SEQUENCE [LARGE SCALE GENOMIC DNA]</scope>
    <source>
        <strain>WY96-3418</strain>
    </source>
</reference>
<evidence type="ECO:0000255" key="1">
    <source>
        <dbReference type="HAMAP-Rule" id="MF_00096"/>
    </source>
</evidence>
<gene>
    <name evidence="1" type="primary">mutS</name>
    <name type="ordered locus">FTW_0792</name>
</gene>
<comment type="function">
    <text evidence="1">This protein is involved in the repair of mismatches in DNA. It is possible that it carries out the mismatch recognition step. This protein has a weak ATPase activity.</text>
</comment>
<comment type="similarity">
    <text evidence="1">Belongs to the DNA mismatch repair MutS family.</text>
</comment>
<accession>A4IXL2</accession>
<organism>
    <name type="scientific">Francisella tularensis subsp. tularensis (strain WY96-3418)</name>
    <dbReference type="NCBI Taxonomy" id="418136"/>
    <lineage>
        <taxon>Bacteria</taxon>
        <taxon>Pseudomonadati</taxon>
        <taxon>Pseudomonadota</taxon>
        <taxon>Gammaproteobacteria</taxon>
        <taxon>Thiotrichales</taxon>
        <taxon>Francisellaceae</taxon>
        <taxon>Francisella</taxon>
    </lineage>
</organism>